<proteinExistence type="evidence at protein level"/>
<name>AGP24_ARATH</name>
<dbReference type="EMBL" id="AB009052">
    <property type="status" value="NOT_ANNOTATED_CDS"/>
    <property type="molecule type" value="Genomic_DNA"/>
</dbReference>
<dbReference type="EMBL" id="CP002688">
    <property type="protein sequence ID" value="AED94588.1"/>
    <property type="molecule type" value="Genomic_DNA"/>
</dbReference>
<dbReference type="EMBL" id="BT020285">
    <property type="protein sequence ID" value="AAV84506.1"/>
    <property type="molecule type" value="mRNA"/>
</dbReference>
<dbReference type="EMBL" id="BT025562">
    <property type="protein sequence ID" value="ABF58980.1"/>
    <property type="molecule type" value="mRNA"/>
</dbReference>
<dbReference type="EMBL" id="AY085662">
    <property type="protein sequence ID" value="AAM67306.1"/>
    <property type="molecule type" value="mRNA"/>
</dbReference>
<dbReference type="RefSeq" id="NP_198889.1">
    <property type="nucleotide sequence ID" value="NM_123438.3"/>
</dbReference>
<dbReference type="BioGRID" id="19324">
    <property type="interactions" value="1"/>
</dbReference>
<dbReference type="FunCoup" id="Q5PP12">
    <property type="interactions" value="37"/>
</dbReference>
<dbReference type="STRING" id="3702.Q5PP12"/>
<dbReference type="GlyCosmos" id="Q5PP12">
    <property type="glycosylation" value="4 sites, No reported glycans"/>
</dbReference>
<dbReference type="PaxDb" id="3702-AT5G40730.1"/>
<dbReference type="EnsemblPlants" id="AT5G40730.1">
    <property type="protein sequence ID" value="AT5G40730.1"/>
    <property type="gene ID" value="AT5G40730"/>
</dbReference>
<dbReference type="GeneID" id="834073"/>
<dbReference type="Gramene" id="AT5G40730.1">
    <property type="protein sequence ID" value="AT5G40730.1"/>
    <property type="gene ID" value="AT5G40730"/>
</dbReference>
<dbReference type="KEGG" id="ath:AT5G40730"/>
<dbReference type="Araport" id="AT5G40730"/>
<dbReference type="TAIR" id="AT5G40730">
    <property type="gene designation" value="AGP24"/>
</dbReference>
<dbReference type="HOGENOM" id="CLU_2779330_0_0_1"/>
<dbReference type="InParanoid" id="Q5PP12"/>
<dbReference type="OMA" id="ATNMFTV"/>
<dbReference type="PRO" id="PR:Q5PP12"/>
<dbReference type="Proteomes" id="UP000006548">
    <property type="component" value="Chromosome 5"/>
</dbReference>
<dbReference type="GO" id="GO:0005886">
    <property type="term" value="C:plasma membrane"/>
    <property type="evidence" value="ECO:0007669"/>
    <property type="project" value="UniProtKB-SubCell"/>
</dbReference>
<dbReference type="GO" id="GO:0098552">
    <property type="term" value="C:side of membrane"/>
    <property type="evidence" value="ECO:0007669"/>
    <property type="project" value="UniProtKB-KW"/>
</dbReference>
<comment type="function">
    <text evidence="3">Proteoglycan that seems to be implicated in diverse developmental roles such as differentiation, cell-cell recognition, embryogenesis and programmed cell death.</text>
</comment>
<comment type="subcellular location">
    <subcellularLocation>
        <location evidence="3">Cell membrane</location>
        <topology evidence="1">Lipid-anchor</topology>
        <topology evidence="1">GPI-anchor</topology>
    </subcellularLocation>
</comment>
<comment type="PTM">
    <text evidence="1">Contains 4-hydroxyproline; hydroxylated on Pro-34, Pro-36, Pro-38 and Pro-40.</text>
</comment>
<comment type="PTM">
    <text evidence="4">O-glycosylated on hydroxyprolines; noncontiguous hydroxylproline residues are glycosylated with arabinogalactan.</text>
</comment>
<comment type="similarity">
    <text evidence="3">Belongs to the AG-peptide AGP family.</text>
</comment>
<protein>
    <recommendedName>
        <fullName evidence="2">Arabinogalactan protein 24</fullName>
        <shortName evidence="2">AtAGP24</shortName>
    </recommendedName>
    <alternativeName>
        <fullName evidence="2">Arabinogalactan peptide 24</fullName>
        <shortName evidence="2">AG-peptide 24</shortName>
    </alternativeName>
</protein>
<evidence type="ECO:0000269" key="1">
    <source>
    </source>
</evidence>
<evidence type="ECO:0000303" key="2">
    <source>
    </source>
</evidence>
<evidence type="ECO:0000305" key="3"/>
<evidence type="ECO:0000305" key="4">
    <source>
    </source>
</evidence>
<accession>Q5PP12</accession>
<accession>Q8LE23</accession>
<gene>
    <name evidence="2" type="primary">AGP24</name>
    <name type="ordered locus">At5g40730</name>
    <name type="ORF">MNF13.250</name>
</gene>
<reference key="1">
    <citation type="journal article" date="1998" name="DNA Res.">
        <title>Structural analysis of Arabidopsis thaliana chromosome 5. IV. Sequence features of the regions of 1,456,315 bp covered by nineteen physically assigned P1 and TAC clones.</title>
        <authorList>
            <person name="Sato S."/>
            <person name="Kaneko T."/>
            <person name="Kotani H."/>
            <person name="Nakamura Y."/>
            <person name="Asamizu E."/>
            <person name="Miyajima N."/>
            <person name="Tabata S."/>
        </authorList>
    </citation>
    <scope>NUCLEOTIDE SEQUENCE [LARGE SCALE GENOMIC DNA]</scope>
    <source>
        <strain>cv. Columbia</strain>
    </source>
</reference>
<reference key="2">
    <citation type="journal article" date="2017" name="Plant J.">
        <title>Araport11: a complete reannotation of the Arabidopsis thaliana reference genome.</title>
        <authorList>
            <person name="Cheng C.Y."/>
            <person name="Krishnakumar V."/>
            <person name="Chan A.P."/>
            <person name="Thibaud-Nissen F."/>
            <person name="Schobel S."/>
            <person name="Town C.D."/>
        </authorList>
    </citation>
    <scope>GENOME REANNOTATION</scope>
    <source>
        <strain>cv. Columbia</strain>
    </source>
</reference>
<reference key="3">
    <citation type="submission" date="2006-05" db="EMBL/GenBank/DDBJ databases">
        <title>Arabidopsis ORF clones.</title>
        <authorList>
            <person name="Quinitio C."/>
            <person name="Chen H."/>
            <person name="Kim C.J."/>
            <person name="Shinn P."/>
            <person name="Ecker J.R."/>
        </authorList>
    </citation>
    <scope>NUCLEOTIDE SEQUENCE [LARGE SCALE MRNA]</scope>
    <source>
        <strain>cv. Columbia</strain>
    </source>
</reference>
<reference key="4">
    <citation type="submission" date="2002-03" db="EMBL/GenBank/DDBJ databases">
        <title>Full-length cDNA from Arabidopsis thaliana.</title>
        <authorList>
            <person name="Brover V.V."/>
            <person name="Troukhan M.E."/>
            <person name="Alexandrov N.A."/>
            <person name="Lu Y.-P."/>
            <person name="Flavell R.B."/>
            <person name="Feldmann K.A."/>
        </authorList>
    </citation>
    <scope>NUCLEOTIDE SEQUENCE [LARGE SCALE MRNA]</scope>
</reference>
<reference key="5">
    <citation type="journal article" date="2004" name="J. Biol. Chem.">
        <title>Post-translational modifications of arabinogalactan-peptides of Arabidopsis thaliana. Endoplasmic reticulum and glycosylphosphatidylinositol-anchor signal cleavage sites and hydroxylation of proline.</title>
        <authorList>
            <person name="Schultz C.J."/>
            <person name="Ferguson K.L."/>
            <person name="Lahnstein J."/>
            <person name="Bacic A."/>
        </authorList>
    </citation>
    <scope>PROTEIN SEQUENCE OF 26-42</scope>
    <scope>HYDROXYLATION AT PRO-34; PRO-36; PRO-38 AND PRO-40</scope>
    <scope>GLYCOSYLATION AT PRO-34; PRO-36; PRO-38 AND PRO-40</scope>
    <scope>GPI-ANCHOR AT SER-42</scope>
</reference>
<reference key="6">
    <citation type="journal article" date="2002" name="Plant Physiol.">
        <title>Using genomic resources to guide research directions. The arabinogalactan protein gene family as a test case.</title>
        <authorList>
            <person name="Schultz C.J."/>
            <person name="Rumsewicz M.P."/>
            <person name="Johnson K.L."/>
            <person name="Jones B.J."/>
            <person name="Gaspar Y.M."/>
            <person name="Bacic A."/>
        </authorList>
    </citation>
    <scope>GENE FAMILY</scope>
    <scope>NOMENCLATURE</scope>
</reference>
<organism>
    <name type="scientific">Arabidopsis thaliana</name>
    <name type="common">Mouse-ear cress</name>
    <dbReference type="NCBI Taxonomy" id="3702"/>
    <lineage>
        <taxon>Eukaryota</taxon>
        <taxon>Viridiplantae</taxon>
        <taxon>Streptophyta</taxon>
        <taxon>Embryophyta</taxon>
        <taxon>Tracheophyta</taxon>
        <taxon>Spermatophyta</taxon>
        <taxon>Magnoliopsida</taxon>
        <taxon>eudicotyledons</taxon>
        <taxon>Gunneridae</taxon>
        <taxon>Pentapetalae</taxon>
        <taxon>rosids</taxon>
        <taxon>malvids</taxon>
        <taxon>Brassicales</taxon>
        <taxon>Brassicaceae</taxon>
        <taxon>Camelineae</taxon>
        <taxon>Arabidopsis</taxon>
    </lineage>
</organism>
<sequence length="69" mass="7051">MMMMTKMFVQIAVVCLLATMAVVSAHEGHHHHAPAPAPGPASSSTVVSATNMFTVLAIAAVALVVGSNH</sequence>
<keyword id="KW-1003">Cell membrane</keyword>
<keyword id="KW-0903">Direct protein sequencing</keyword>
<keyword id="KW-0325">Glycoprotein</keyword>
<keyword id="KW-0336">GPI-anchor</keyword>
<keyword id="KW-0379">Hydroxylation</keyword>
<keyword id="KW-0449">Lipoprotein</keyword>
<keyword id="KW-0472">Membrane</keyword>
<keyword id="KW-0654">Proteoglycan</keyword>
<keyword id="KW-1185">Reference proteome</keyword>
<keyword id="KW-0732">Signal</keyword>
<feature type="signal peptide" evidence="1">
    <location>
        <begin position="1"/>
        <end position="25"/>
    </location>
</feature>
<feature type="peptide" id="PRO_0000269029" description="Arabinogalactan protein 24" evidence="1">
    <location>
        <begin position="26"/>
        <end position="42"/>
    </location>
</feature>
<feature type="propeptide" id="PRO_0000269030" description="Removed in mature form" evidence="4">
    <location>
        <begin position="43"/>
        <end position="69"/>
    </location>
</feature>
<feature type="modified residue" description="4-hydroxyproline" evidence="1">
    <location>
        <position position="34"/>
    </location>
</feature>
<feature type="modified residue" description="4-hydroxyproline" evidence="1">
    <location>
        <position position="36"/>
    </location>
</feature>
<feature type="modified residue" description="4-hydroxyproline" evidence="1">
    <location>
        <position position="38"/>
    </location>
</feature>
<feature type="modified residue" description="4-hydroxyproline" evidence="1">
    <location>
        <position position="40"/>
    </location>
</feature>
<feature type="lipid moiety-binding region" description="GPI-anchor amidated serine" evidence="1">
    <location>
        <position position="42"/>
    </location>
</feature>
<feature type="glycosylation site" description="O-linked (Ara...) hydroxyproline" evidence="4">
    <location>
        <position position="34"/>
    </location>
</feature>
<feature type="glycosylation site" description="O-linked (Ara...) hydroxyproline" evidence="4">
    <location>
        <position position="36"/>
    </location>
</feature>
<feature type="glycosylation site" description="O-linked (Ara...) hydroxyproline" evidence="4">
    <location>
        <position position="38"/>
    </location>
</feature>
<feature type="glycosylation site" description="O-linked (Ara...) hydroxyproline" evidence="4">
    <location>
        <position position="40"/>
    </location>
</feature>
<feature type="sequence conflict" description="In Ref. 4; AAM67306." evidence="3" ref="4">
    <original>T</original>
    <variation>K</variation>
    <location>
        <position position="5"/>
    </location>
</feature>
<feature type="sequence conflict" description="In Ref. 4; AAM67306." evidence="3" ref="4">
    <original>S</original>
    <variation>F</variation>
    <location>
        <position position="24"/>
    </location>
</feature>